<keyword id="KW-0030">Aminoacyl-tRNA synthetase</keyword>
<keyword id="KW-0067">ATP-binding</keyword>
<keyword id="KW-0963">Cytoplasm</keyword>
<keyword id="KW-0436">Ligase</keyword>
<keyword id="KW-0460">Magnesium</keyword>
<keyword id="KW-0479">Metal-binding</keyword>
<keyword id="KW-0547">Nucleotide-binding</keyword>
<keyword id="KW-0648">Protein biosynthesis</keyword>
<feature type="chain" id="PRO_1000114926" description="Phenylalanine--tRNA ligase alpha subunit">
    <location>
        <begin position="1"/>
        <end position="327"/>
    </location>
</feature>
<feature type="binding site" evidence="1">
    <location>
        <position position="252"/>
    </location>
    <ligand>
        <name>Mg(2+)</name>
        <dbReference type="ChEBI" id="CHEBI:18420"/>
        <note>shared with beta subunit</note>
    </ligand>
</feature>
<sequence length="327" mass="37144">MQHLDEIIANATAEIEQAGSLVALDEVRVQYLGKKGHLTLQLQGLGKLDPSERREAGQLINKGKQAVQAMLTERKDALQTAELEAKLAAETIDVSLPGRRIENGGLHPVTRTVERIEQFFGELGFSTESGPEIEDAFHNFDALNIAEDHPARTDHDTFFFNPDLMLRTHTSGVQIRTMENGKPPFRFIAPGRVYRNDYDQTHTPMFHQVEGMLVDENVNFAQLKGILHDFLCNFFEEEVEVRFRPSFFPFTEPSAEVDVKRKDGKWLEVLGCGMVHPNVLRSVGIDPEKYSGFAFGMGVERLTMLRYGVNDLRAFFENDLRFLKQFK</sequence>
<dbReference type="EC" id="6.1.1.20" evidence="1"/>
<dbReference type="EMBL" id="CP001139">
    <property type="protein sequence ID" value="ACH65274.1"/>
    <property type="molecule type" value="Genomic_DNA"/>
</dbReference>
<dbReference type="RefSeq" id="WP_005419116.1">
    <property type="nucleotide sequence ID" value="NC_011184.1"/>
</dbReference>
<dbReference type="SMR" id="B5FDX4"/>
<dbReference type="GeneID" id="54163906"/>
<dbReference type="KEGG" id="vfm:VFMJ11_1318"/>
<dbReference type="HOGENOM" id="CLU_025086_0_1_6"/>
<dbReference type="Proteomes" id="UP000001857">
    <property type="component" value="Chromosome I"/>
</dbReference>
<dbReference type="GO" id="GO:0005737">
    <property type="term" value="C:cytoplasm"/>
    <property type="evidence" value="ECO:0007669"/>
    <property type="project" value="UniProtKB-SubCell"/>
</dbReference>
<dbReference type="GO" id="GO:0005524">
    <property type="term" value="F:ATP binding"/>
    <property type="evidence" value="ECO:0007669"/>
    <property type="project" value="UniProtKB-UniRule"/>
</dbReference>
<dbReference type="GO" id="GO:0000287">
    <property type="term" value="F:magnesium ion binding"/>
    <property type="evidence" value="ECO:0007669"/>
    <property type="project" value="UniProtKB-UniRule"/>
</dbReference>
<dbReference type="GO" id="GO:0004826">
    <property type="term" value="F:phenylalanine-tRNA ligase activity"/>
    <property type="evidence" value="ECO:0007669"/>
    <property type="project" value="UniProtKB-UniRule"/>
</dbReference>
<dbReference type="GO" id="GO:0000049">
    <property type="term" value="F:tRNA binding"/>
    <property type="evidence" value="ECO:0007669"/>
    <property type="project" value="InterPro"/>
</dbReference>
<dbReference type="GO" id="GO:0006432">
    <property type="term" value="P:phenylalanyl-tRNA aminoacylation"/>
    <property type="evidence" value="ECO:0007669"/>
    <property type="project" value="UniProtKB-UniRule"/>
</dbReference>
<dbReference type="CDD" id="cd00496">
    <property type="entry name" value="PheRS_alpha_core"/>
    <property type="match status" value="1"/>
</dbReference>
<dbReference type="FunFam" id="3.30.930.10:FF:000003">
    <property type="entry name" value="Phenylalanine--tRNA ligase alpha subunit"/>
    <property type="match status" value="1"/>
</dbReference>
<dbReference type="Gene3D" id="3.30.930.10">
    <property type="entry name" value="Bira Bifunctional Protein, Domain 2"/>
    <property type="match status" value="1"/>
</dbReference>
<dbReference type="HAMAP" id="MF_00281">
    <property type="entry name" value="Phe_tRNA_synth_alpha1"/>
    <property type="match status" value="1"/>
</dbReference>
<dbReference type="InterPro" id="IPR006195">
    <property type="entry name" value="aa-tRNA-synth_II"/>
</dbReference>
<dbReference type="InterPro" id="IPR045864">
    <property type="entry name" value="aa-tRNA-synth_II/BPL/LPL"/>
</dbReference>
<dbReference type="InterPro" id="IPR004529">
    <property type="entry name" value="Phe-tRNA-synth_IIc_asu"/>
</dbReference>
<dbReference type="InterPro" id="IPR004188">
    <property type="entry name" value="Phe-tRNA_ligase_II_N"/>
</dbReference>
<dbReference type="InterPro" id="IPR022911">
    <property type="entry name" value="Phe_tRNA_ligase_alpha1_bac"/>
</dbReference>
<dbReference type="InterPro" id="IPR002319">
    <property type="entry name" value="Phenylalanyl-tRNA_Synthase"/>
</dbReference>
<dbReference type="InterPro" id="IPR010978">
    <property type="entry name" value="tRNA-bd_arm"/>
</dbReference>
<dbReference type="NCBIfam" id="TIGR00468">
    <property type="entry name" value="pheS"/>
    <property type="match status" value="1"/>
</dbReference>
<dbReference type="PANTHER" id="PTHR11538:SF41">
    <property type="entry name" value="PHENYLALANINE--TRNA LIGASE, MITOCHONDRIAL"/>
    <property type="match status" value="1"/>
</dbReference>
<dbReference type="PANTHER" id="PTHR11538">
    <property type="entry name" value="PHENYLALANYL-TRNA SYNTHETASE"/>
    <property type="match status" value="1"/>
</dbReference>
<dbReference type="Pfam" id="PF02912">
    <property type="entry name" value="Phe_tRNA-synt_N"/>
    <property type="match status" value="1"/>
</dbReference>
<dbReference type="Pfam" id="PF01409">
    <property type="entry name" value="tRNA-synt_2d"/>
    <property type="match status" value="1"/>
</dbReference>
<dbReference type="SUPFAM" id="SSF55681">
    <property type="entry name" value="Class II aaRS and biotin synthetases"/>
    <property type="match status" value="1"/>
</dbReference>
<dbReference type="SUPFAM" id="SSF46589">
    <property type="entry name" value="tRNA-binding arm"/>
    <property type="match status" value="1"/>
</dbReference>
<dbReference type="PROSITE" id="PS50862">
    <property type="entry name" value="AA_TRNA_LIGASE_II"/>
    <property type="match status" value="1"/>
</dbReference>
<accession>B5FDX4</accession>
<reference key="1">
    <citation type="submission" date="2008-08" db="EMBL/GenBank/DDBJ databases">
        <title>Complete sequence of Vibrio fischeri strain MJ11.</title>
        <authorList>
            <person name="Mandel M.J."/>
            <person name="Stabb E.V."/>
            <person name="Ruby E.G."/>
            <person name="Ferriera S."/>
            <person name="Johnson J."/>
            <person name="Kravitz S."/>
            <person name="Beeson K."/>
            <person name="Sutton G."/>
            <person name="Rogers Y.-H."/>
            <person name="Friedman R."/>
            <person name="Frazier M."/>
            <person name="Venter J.C."/>
        </authorList>
    </citation>
    <scope>NUCLEOTIDE SEQUENCE [LARGE SCALE GENOMIC DNA]</scope>
    <source>
        <strain>MJ11</strain>
    </source>
</reference>
<proteinExistence type="inferred from homology"/>
<evidence type="ECO:0000255" key="1">
    <source>
        <dbReference type="HAMAP-Rule" id="MF_00281"/>
    </source>
</evidence>
<name>SYFA_ALIFM</name>
<organism>
    <name type="scientific">Aliivibrio fischeri (strain MJ11)</name>
    <name type="common">Vibrio fischeri</name>
    <dbReference type="NCBI Taxonomy" id="388396"/>
    <lineage>
        <taxon>Bacteria</taxon>
        <taxon>Pseudomonadati</taxon>
        <taxon>Pseudomonadota</taxon>
        <taxon>Gammaproteobacteria</taxon>
        <taxon>Vibrionales</taxon>
        <taxon>Vibrionaceae</taxon>
        <taxon>Aliivibrio</taxon>
    </lineage>
</organism>
<gene>
    <name evidence="1" type="primary">pheS</name>
    <name type="ordered locus">VFMJ11_1318</name>
</gene>
<comment type="catalytic activity">
    <reaction evidence="1">
        <text>tRNA(Phe) + L-phenylalanine + ATP = L-phenylalanyl-tRNA(Phe) + AMP + diphosphate + H(+)</text>
        <dbReference type="Rhea" id="RHEA:19413"/>
        <dbReference type="Rhea" id="RHEA-COMP:9668"/>
        <dbReference type="Rhea" id="RHEA-COMP:9699"/>
        <dbReference type="ChEBI" id="CHEBI:15378"/>
        <dbReference type="ChEBI" id="CHEBI:30616"/>
        <dbReference type="ChEBI" id="CHEBI:33019"/>
        <dbReference type="ChEBI" id="CHEBI:58095"/>
        <dbReference type="ChEBI" id="CHEBI:78442"/>
        <dbReference type="ChEBI" id="CHEBI:78531"/>
        <dbReference type="ChEBI" id="CHEBI:456215"/>
        <dbReference type="EC" id="6.1.1.20"/>
    </reaction>
</comment>
<comment type="cofactor">
    <cofactor evidence="1">
        <name>Mg(2+)</name>
        <dbReference type="ChEBI" id="CHEBI:18420"/>
    </cofactor>
    <text evidence="1">Binds 2 magnesium ions per tetramer.</text>
</comment>
<comment type="subunit">
    <text evidence="1">Tetramer of two alpha and two beta subunits.</text>
</comment>
<comment type="subcellular location">
    <subcellularLocation>
        <location evidence="1">Cytoplasm</location>
    </subcellularLocation>
</comment>
<comment type="similarity">
    <text evidence="1">Belongs to the class-II aminoacyl-tRNA synthetase family. Phe-tRNA synthetase alpha subunit type 1 subfamily.</text>
</comment>
<protein>
    <recommendedName>
        <fullName evidence="1">Phenylalanine--tRNA ligase alpha subunit</fullName>
        <ecNumber evidence="1">6.1.1.20</ecNumber>
    </recommendedName>
    <alternativeName>
        <fullName evidence="1">Phenylalanyl-tRNA synthetase alpha subunit</fullName>
        <shortName evidence="1">PheRS</shortName>
    </alternativeName>
</protein>